<comment type="function">
    <text evidence="1">Component of the small ribosomal subunit. The ribosome is a large ribonucleoprotein complex responsible for the synthesis of proteins in the cell. Part of the small subunit (SSU) processome, first precursor of the small eukaryotic ribosomal subunit. During the assembly of the SSU processome in the nucleolus, many ribosome biogenesis factors, an RNA chaperone and ribosomal proteins associate with the nascent pre-rRNA and work in concert to generate RNA folding, modifications, rearrangements and cleavage as well as targeted degradation of pre-ribosomal RNA by the RNA exosome.</text>
</comment>
<comment type="subunit">
    <text evidence="1">Component of the small ribosomal subunit. Part of the small subunit (SSU) processome, composed of more than 70 proteins and the RNA chaperone small nucleolar RNA (snoRNA) U3.</text>
</comment>
<comment type="subcellular location">
    <subcellularLocation>
        <location evidence="1">Cytoplasm</location>
    </subcellularLocation>
    <subcellularLocation>
        <location evidence="1">Nucleus</location>
        <location evidence="1">Nucleolus</location>
    </subcellularLocation>
</comment>
<comment type="PTM">
    <text evidence="2">Citrullinated by PADI4.</text>
</comment>
<comment type="similarity">
    <text evidence="4">Belongs to the universal ribosomal protein uS17 family.</text>
</comment>
<gene>
    <name type="primary">Rps11</name>
</gene>
<sequence>MADIQTERAYQKQPTIFQNKKRVLLGETGKEKLPRYYKNIGLGFKTPKEAIEGTYIDKKCPFTGNVSIRGRILSGVVTKMKMQRTIVIRRDYLHYIRKYNRFEKRHKNMSVHLSPCFRDVQIGDIVTVGECRPLSKTVRFNVLKVTKAAGTKKQFQKF</sequence>
<organism>
    <name type="scientific">Rattus norvegicus</name>
    <name type="common">Rat</name>
    <dbReference type="NCBI Taxonomy" id="10116"/>
    <lineage>
        <taxon>Eukaryota</taxon>
        <taxon>Metazoa</taxon>
        <taxon>Chordata</taxon>
        <taxon>Craniata</taxon>
        <taxon>Vertebrata</taxon>
        <taxon>Euteleostomi</taxon>
        <taxon>Mammalia</taxon>
        <taxon>Eutheria</taxon>
        <taxon>Euarchontoglires</taxon>
        <taxon>Glires</taxon>
        <taxon>Rodentia</taxon>
        <taxon>Myomorpha</taxon>
        <taxon>Muroidea</taxon>
        <taxon>Muridae</taxon>
        <taxon>Murinae</taxon>
        <taxon>Rattus</taxon>
    </lineage>
</organism>
<evidence type="ECO:0000250" key="1">
    <source>
        <dbReference type="UniProtKB" id="P62280"/>
    </source>
</evidence>
<evidence type="ECO:0000250" key="2">
    <source>
        <dbReference type="UniProtKB" id="P62281"/>
    </source>
</evidence>
<evidence type="ECO:0000269" key="3">
    <source ref="2"/>
</evidence>
<evidence type="ECO:0000305" key="4"/>
<reference key="1">
    <citation type="journal article" date="1985" name="J. Biol. Chem.">
        <title>Nucleotide sequence of cloned cDNA specific for rat ribosomal protein S11.</title>
        <authorList>
            <person name="Tanaka T."/>
            <person name="Kuwano Y."/>
            <person name="Ishikawa K."/>
            <person name="Ogata K."/>
        </authorList>
    </citation>
    <scope>NUCLEOTIDE SEQUENCE [MRNA]</scope>
</reference>
<reference key="2">
    <citation type="submission" date="2006-08" db="UniProtKB">
        <authorList>
            <person name="Bienvenut W.V."/>
            <person name="von Kriegsheim A.F."/>
            <person name="Kolch W."/>
        </authorList>
    </citation>
    <scope>PROTEIN SEQUENCE OF 2-8; 13-20; 23-38; 49-58; 72-79 AND 91-97</scope>
    <scope>CLEAVAGE OF INITIATOR METHIONINE</scope>
    <scope>ACETYLATION AT ALA-2</scope>
    <scope>IDENTIFICATION BY MASS SPECTROMETRY</scope>
    <source>
        <tissue>Pheochromocytoma</tissue>
    </source>
</reference>
<keyword id="KW-0007">Acetylation</keyword>
<keyword id="KW-0164">Citrullination</keyword>
<keyword id="KW-0963">Cytoplasm</keyword>
<keyword id="KW-0903">Direct protein sequencing</keyword>
<keyword id="KW-0449">Lipoprotein</keyword>
<keyword id="KW-0488">Methylation</keyword>
<keyword id="KW-0539">Nucleus</keyword>
<keyword id="KW-0564">Palmitate</keyword>
<keyword id="KW-0597">Phosphoprotein</keyword>
<keyword id="KW-1185">Reference proteome</keyword>
<keyword id="KW-0687">Ribonucleoprotein</keyword>
<keyword id="KW-0689">Ribosomal protein</keyword>
<keyword id="KW-0694">RNA-binding</keyword>
<keyword id="KW-0699">rRNA-binding</keyword>
<proteinExistence type="evidence at protein level"/>
<protein>
    <recommendedName>
        <fullName evidence="4">Small ribosomal subunit protein uS17</fullName>
    </recommendedName>
    <alternativeName>
        <fullName>40S ribosomal protein S11</fullName>
    </alternativeName>
</protein>
<dbReference type="EMBL" id="K03250">
    <property type="protein sequence ID" value="AAA42076.1"/>
    <property type="molecule type" value="mRNA"/>
</dbReference>
<dbReference type="PIR" id="A22618">
    <property type="entry name" value="R3RT11"/>
</dbReference>
<dbReference type="RefSeq" id="NP_112372.1">
    <property type="nucleotide sequence ID" value="NM_031110.1"/>
</dbReference>
<dbReference type="SMR" id="P62282"/>
<dbReference type="BioGRID" id="249646">
    <property type="interactions" value="5"/>
</dbReference>
<dbReference type="FunCoup" id="P62282">
    <property type="interactions" value="2732"/>
</dbReference>
<dbReference type="IntAct" id="P62282">
    <property type="interactions" value="3"/>
</dbReference>
<dbReference type="MINT" id="P62282"/>
<dbReference type="STRING" id="10116.ENSRNOP00000061250"/>
<dbReference type="iPTMnet" id="P62282"/>
<dbReference type="PhosphoSitePlus" id="P62282"/>
<dbReference type="jPOST" id="P62282"/>
<dbReference type="PaxDb" id="10116-ENSRNOP00000061250"/>
<dbReference type="Ensembl" id="ENSRNOT00000066328.4">
    <property type="protein sequence ID" value="ENSRNOP00000061250.1"/>
    <property type="gene ID" value="ENSRNOG00000020595.9"/>
</dbReference>
<dbReference type="GeneID" id="81774"/>
<dbReference type="KEGG" id="rno:81774"/>
<dbReference type="UCSC" id="RGD:621026">
    <property type="organism name" value="rat"/>
</dbReference>
<dbReference type="AGR" id="RGD:621026"/>
<dbReference type="CTD" id="6205"/>
<dbReference type="RGD" id="621026">
    <property type="gene designation" value="Rps11"/>
</dbReference>
<dbReference type="eggNOG" id="KOG1728">
    <property type="taxonomic scope" value="Eukaryota"/>
</dbReference>
<dbReference type="GeneTree" id="ENSGT00390000002732"/>
<dbReference type="HOGENOM" id="CLU_073626_0_2_1"/>
<dbReference type="InParanoid" id="P62282"/>
<dbReference type="OrthoDB" id="10254436at2759"/>
<dbReference type="PhylomeDB" id="P62282"/>
<dbReference type="Reactome" id="R-RNO-156827">
    <property type="pathway name" value="L13a-mediated translational silencing of Ceruloplasmin expression"/>
</dbReference>
<dbReference type="Reactome" id="R-RNO-1799339">
    <property type="pathway name" value="SRP-dependent cotranslational protein targeting to membrane"/>
</dbReference>
<dbReference type="Reactome" id="R-RNO-6791226">
    <property type="pathway name" value="Major pathway of rRNA processing in the nucleolus and cytosol"/>
</dbReference>
<dbReference type="Reactome" id="R-RNO-72649">
    <property type="pathway name" value="Translation initiation complex formation"/>
</dbReference>
<dbReference type="Reactome" id="R-RNO-72689">
    <property type="pathway name" value="Formation of a pool of free 40S subunits"/>
</dbReference>
<dbReference type="Reactome" id="R-RNO-72695">
    <property type="pathway name" value="Formation of the ternary complex, and subsequently, the 43S complex"/>
</dbReference>
<dbReference type="Reactome" id="R-RNO-72702">
    <property type="pathway name" value="Ribosomal scanning and start codon recognition"/>
</dbReference>
<dbReference type="Reactome" id="R-RNO-72706">
    <property type="pathway name" value="GTP hydrolysis and joining of the 60S ribosomal subunit"/>
</dbReference>
<dbReference type="Reactome" id="R-RNO-975956">
    <property type="pathway name" value="Nonsense Mediated Decay (NMD) independent of the Exon Junction Complex (EJC)"/>
</dbReference>
<dbReference type="Reactome" id="R-RNO-975957">
    <property type="pathway name" value="Nonsense Mediated Decay (NMD) enhanced by the Exon Junction Complex (EJC)"/>
</dbReference>
<dbReference type="CD-CODE" id="34881ED2">
    <property type="entry name" value="Nucleolus"/>
</dbReference>
<dbReference type="PRO" id="PR:P62282"/>
<dbReference type="Proteomes" id="UP000002494">
    <property type="component" value="Chromosome 1"/>
</dbReference>
<dbReference type="Bgee" id="ENSRNOG00000020595">
    <property type="expression patterns" value="Expressed in thymus and 19 other cell types or tissues"/>
</dbReference>
<dbReference type="GO" id="GO:0022626">
    <property type="term" value="C:cytosolic ribosome"/>
    <property type="evidence" value="ECO:0000266"/>
    <property type="project" value="RGD"/>
</dbReference>
<dbReference type="GO" id="GO:0022627">
    <property type="term" value="C:cytosolic small ribosomal subunit"/>
    <property type="evidence" value="ECO:0000314"/>
    <property type="project" value="RGD"/>
</dbReference>
<dbReference type="GO" id="GO:0016020">
    <property type="term" value="C:membrane"/>
    <property type="evidence" value="ECO:0007005"/>
    <property type="project" value="UniProtKB"/>
</dbReference>
<dbReference type="GO" id="GO:0005730">
    <property type="term" value="C:nucleolus"/>
    <property type="evidence" value="ECO:0007669"/>
    <property type="project" value="UniProtKB-SubCell"/>
</dbReference>
<dbReference type="GO" id="GO:0032040">
    <property type="term" value="C:small-subunit processome"/>
    <property type="evidence" value="ECO:0000250"/>
    <property type="project" value="UniProtKB"/>
</dbReference>
<dbReference type="GO" id="GO:0045202">
    <property type="term" value="C:synapse"/>
    <property type="evidence" value="ECO:0000266"/>
    <property type="project" value="RGD"/>
</dbReference>
<dbReference type="GO" id="GO:0019843">
    <property type="term" value="F:rRNA binding"/>
    <property type="evidence" value="ECO:0007669"/>
    <property type="project" value="UniProtKB-KW"/>
</dbReference>
<dbReference type="GO" id="GO:0003735">
    <property type="term" value="F:structural constituent of ribosome"/>
    <property type="evidence" value="ECO:0000266"/>
    <property type="project" value="RGD"/>
</dbReference>
<dbReference type="GO" id="GO:0001649">
    <property type="term" value="P:osteoblast differentiation"/>
    <property type="evidence" value="ECO:0007005"/>
    <property type="project" value="UniProtKB"/>
</dbReference>
<dbReference type="GO" id="GO:0042274">
    <property type="term" value="P:ribosomal small subunit biogenesis"/>
    <property type="evidence" value="ECO:0000250"/>
    <property type="project" value="UniProtKB"/>
</dbReference>
<dbReference type="GO" id="GO:0006412">
    <property type="term" value="P:translation"/>
    <property type="evidence" value="ECO:0007669"/>
    <property type="project" value="InterPro"/>
</dbReference>
<dbReference type="CDD" id="cd00364">
    <property type="entry name" value="Ribosomal_uS17"/>
    <property type="match status" value="1"/>
</dbReference>
<dbReference type="FunFam" id="2.40.50.1000:FF:000008">
    <property type="entry name" value="40S ribosomal protein S11"/>
    <property type="match status" value="1"/>
</dbReference>
<dbReference type="Gene3D" id="2.40.50.1000">
    <property type="match status" value="1"/>
</dbReference>
<dbReference type="InterPro" id="IPR012340">
    <property type="entry name" value="NA-bd_OB-fold"/>
</dbReference>
<dbReference type="InterPro" id="IPR000266">
    <property type="entry name" value="Ribosomal_uS17"/>
</dbReference>
<dbReference type="InterPro" id="IPR028333">
    <property type="entry name" value="Ribosomal_uS17_arc/euk"/>
</dbReference>
<dbReference type="InterPro" id="IPR019979">
    <property type="entry name" value="Ribosomal_uS17_CS"/>
</dbReference>
<dbReference type="InterPro" id="IPR032440">
    <property type="entry name" value="Ribosomal_uS17_N"/>
</dbReference>
<dbReference type="NCBIfam" id="NF006345">
    <property type="entry name" value="PRK08572.1"/>
    <property type="match status" value="1"/>
</dbReference>
<dbReference type="NCBIfam" id="TIGR03630">
    <property type="entry name" value="uS17_arch"/>
    <property type="match status" value="1"/>
</dbReference>
<dbReference type="PANTHER" id="PTHR10744">
    <property type="entry name" value="40S RIBOSOMAL PROTEIN S11 FAMILY MEMBER"/>
    <property type="match status" value="1"/>
</dbReference>
<dbReference type="PANTHER" id="PTHR10744:SF52">
    <property type="entry name" value="SMALL RIBOSOMAL SUBUNIT PROTEIN US17"/>
    <property type="match status" value="1"/>
</dbReference>
<dbReference type="Pfam" id="PF00366">
    <property type="entry name" value="Ribosomal_S17"/>
    <property type="match status" value="1"/>
</dbReference>
<dbReference type="Pfam" id="PF16205">
    <property type="entry name" value="Ribosomal_S17_N"/>
    <property type="match status" value="1"/>
</dbReference>
<dbReference type="PRINTS" id="PR00973">
    <property type="entry name" value="RIBOSOMALS17"/>
</dbReference>
<dbReference type="SUPFAM" id="SSF50249">
    <property type="entry name" value="Nucleic acid-binding proteins"/>
    <property type="match status" value="1"/>
</dbReference>
<dbReference type="PROSITE" id="PS00056">
    <property type="entry name" value="RIBOSOMAL_S17"/>
    <property type="match status" value="1"/>
</dbReference>
<accession>P62282</accession>
<accession>P04643</accession>
<name>RS11_RAT</name>
<feature type="initiator methionine" description="Removed" evidence="3">
    <location>
        <position position="1"/>
    </location>
</feature>
<feature type="chain" id="PRO_0000128512" description="Small ribosomal subunit protein uS17">
    <location>
        <begin position="2"/>
        <end position="158"/>
    </location>
</feature>
<feature type="modified residue" description="N-acetylalanine" evidence="3">
    <location>
        <position position="2"/>
    </location>
</feature>
<feature type="modified residue" description="Citrulline" evidence="2">
    <location>
        <position position="22"/>
    </location>
</feature>
<feature type="modified residue" description="N6-acetyllysine" evidence="1">
    <location>
        <position position="38"/>
    </location>
</feature>
<feature type="modified residue" description="N6-acetyllysine" evidence="1">
    <location>
        <position position="45"/>
    </location>
</feature>
<feature type="modified residue" description="N6-acetyllysine" evidence="2">
    <location>
        <position position="58"/>
    </location>
</feature>
<feature type="modified residue" description="Phosphoserine" evidence="1">
    <location>
        <position position="67"/>
    </location>
</feature>
<feature type="modified residue" description="Omega-N-methylarginine" evidence="2">
    <location>
        <position position="69"/>
    </location>
</feature>
<feature type="modified residue" description="Phosphoserine" evidence="1">
    <location>
        <position position="110"/>
    </location>
</feature>
<feature type="lipid moiety-binding region" description="S-palmitoyl cysteine" evidence="1">
    <location>
        <position position="60"/>
    </location>
</feature>